<protein>
    <recommendedName>
        <fullName>Protein C1orf43 homolog</fullName>
    </recommendedName>
</protein>
<accession>Q5E943</accession>
<accession>Q17QJ8</accession>
<reference key="1">
    <citation type="journal article" date="2005" name="BMC Genomics">
        <title>Characterization of 954 bovine full-CDS cDNA sequences.</title>
        <authorList>
            <person name="Harhay G.P."/>
            <person name="Sonstegard T.S."/>
            <person name="Keele J.W."/>
            <person name="Heaton M.P."/>
            <person name="Clawson M.L."/>
            <person name="Snelling W.M."/>
            <person name="Wiedmann R.T."/>
            <person name="Van Tassell C.P."/>
            <person name="Smith T.P.L."/>
        </authorList>
    </citation>
    <scope>NUCLEOTIDE SEQUENCE [LARGE SCALE MRNA]</scope>
</reference>
<reference key="2">
    <citation type="submission" date="2006-06" db="EMBL/GenBank/DDBJ databases">
        <authorList>
            <consortium name="NIH - Mammalian Gene Collection (MGC) project"/>
        </authorList>
    </citation>
    <scope>NUCLEOTIDE SEQUENCE [LARGE SCALE MRNA]</scope>
    <source>
        <strain>Hereford</strain>
        <tissue>Fetal muscle</tissue>
    </source>
</reference>
<keyword id="KW-0333">Golgi apparatus</keyword>
<keyword id="KW-0472">Membrane</keyword>
<keyword id="KW-0496">Mitochondrion</keyword>
<keyword id="KW-1185">Reference proteome</keyword>
<keyword id="KW-0812">Transmembrane</keyword>
<keyword id="KW-1133">Transmembrane helix</keyword>
<dbReference type="EMBL" id="BT021077">
    <property type="protein sequence ID" value="AAX09094.1"/>
    <property type="molecule type" value="mRNA"/>
</dbReference>
<dbReference type="EMBL" id="BC118321">
    <property type="protein sequence ID" value="AAI18322.1"/>
    <property type="molecule type" value="mRNA"/>
</dbReference>
<dbReference type="RefSeq" id="NP_001015666.1">
    <property type="nucleotide sequence ID" value="NM_001015666.1"/>
</dbReference>
<dbReference type="FunCoup" id="Q5E943">
    <property type="interactions" value="2443"/>
</dbReference>
<dbReference type="STRING" id="9913.ENSBTAP00000026674"/>
<dbReference type="PaxDb" id="9913-ENSBTAP00000026674"/>
<dbReference type="GeneID" id="538459"/>
<dbReference type="KEGG" id="bta:538459"/>
<dbReference type="CTD" id="538459"/>
<dbReference type="eggNOG" id="ENOG502QUKH">
    <property type="taxonomic scope" value="Eukaryota"/>
</dbReference>
<dbReference type="InParanoid" id="Q5E943"/>
<dbReference type="OrthoDB" id="5960253at2759"/>
<dbReference type="Proteomes" id="UP000009136">
    <property type="component" value="Unplaced"/>
</dbReference>
<dbReference type="GO" id="GO:0005794">
    <property type="term" value="C:Golgi apparatus"/>
    <property type="evidence" value="ECO:0000250"/>
    <property type="project" value="UniProtKB"/>
</dbReference>
<dbReference type="GO" id="GO:0016020">
    <property type="term" value="C:membrane"/>
    <property type="evidence" value="ECO:0007669"/>
    <property type="project" value="UniProtKB-SubCell"/>
</dbReference>
<dbReference type="GO" id="GO:0005739">
    <property type="term" value="C:mitochondrion"/>
    <property type="evidence" value="ECO:0000250"/>
    <property type="project" value="UniProtKB"/>
</dbReference>
<dbReference type="GO" id="GO:0006909">
    <property type="term" value="P:phagocytosis"/>
    <property type="evidence" value="ECO:0000250"/>
    <property type="project" value="UniProtKB"/>
</dbReference>
<dbReference type="InterPro" id="IPR010876">
    <property type="entry name" value="C1orf43"/>
</dbReference>
<dbReference type="PANTHER" id="PTHR21425">
    <property type="entry name" value="NICE-3"/>
    <property type="match status" value="1"/>
</dbReference>
<dbReference type="PANTHER" id="PTHR21425:SF2">
    <property type="entry name" value="PROTEIN C1ORF43"/>
    <property type="match status" value="1"/>
</dbReference>
<dbReference type="Pfam" id="PF07406">
    <property type="entry name" value="NICE-3"/>
    <property type="match status" value="1"/>
</dbReference>
<evidence type="ECO:0000250" key="1">
    <source>
        <dbReference type="UniProtKB" id="Q9BWL3"/>
    </source>
</evidence>
<evidence type="ECO:0000255" key="2"/>
<evidence type="ECO:0000256" key="3">
    <source>
        <dbReference type="SAM" id="MobiDB-lite"/>
    </source>
</evidence>
<evidence type="ECO:0000305" key="4"/>
<comment type="function">
    <text evidence="1">General regulator of phagocytosis. Required to uptake Gram negative bacterium by macrophages.</text>
</comment>
<comment type="subcellular location">
    <subcellularLocation>
        <location evidence="4">Membrane</location>
        <topology evidence="4">Single-pass membrane protein</topology>
    </subcellularLocation>
    <subcellularLocation>
        <location evidence="1">Golgi apparatus</location>
    </subcellularLocation>
    <subcellularLocation>
        <location evidence="1">Mitochondrion</location>
    </subcellularLocation>
</comment>
<comment type="domain">
    <text evidence="1">N-terminal region is required for phagocytosis of Gram negative bacterium.</text>
</comment>
<name>CA043_BOVIN</name>
<feature type="chain" id="PRO_0000089255" description="Protein C1orf43 homolog">
    <location>
        <begin position="1"/>
        <end position="253"/>
    </location>
</feature>
<feature type="transmembrane region" description="Helical" evidence="2">
    <location>
        <begin position="11"/>
        <end position="31"/>
    </location>
</feature>
<feature type="region of interest" description="Disordered" evidence="3">
    <location>
        <begin position="194"/>
        <end position="213"/>
    </location>
</feature>
<proteinExistence type="evidence at transcript level"/>
<organism>
    <name type="scientific">Bos taurus</name>
    <name type="common">Bovine</name>
    <dbReference type="NCBI Taxonomy" id="9913"/>
    <lineage>
        <taxon>Eukaryota</taxon>
        <taxon>Metazoa</taxon>
        <taxon>Chordata</taxon>
        <taxon>Craniata</taxon>
        <taxon>Vertebrata</taxon>
        <taxon>Euteleostomi</taxon>
        <taxon>Mammalia</taxon>
        <taxon>Eutheria</taxon>
        <taxon>Laurasiatheria</taxon>
        <taxon>Artiodactyla</taxon>
        <taxon>Ruminantia</taxon>
        <taxon>Pecora</taxon>
        <taxon>Bovidae</taxon>
        <taxon>Bovinae</taxon>
        <taxon>Bos</taxon>
    </lineage>
</organism>
<sequence length="253" mass="28673">MASGSNWLSGVNVVLVMAYGSLVFVLLFIFVKRQIMRFAMKSRRGPHVPVGHNAPKDLKEEIDIRLSKVQDIKYEPQLLADDDARLLQLETQGNHNCYNYLYRMKALDAIRASEIPFHAEGRHPHSLMGKNFRSYLLDLRNTSTPFKGVRKALIDTLLDGYETARYGTGVFGLSEYLRYQEALSELATVVKARSGSSQRQHQSAAKDLTQSPEVSPTTIQVTYLPSSQKSKRAKHFLELKSFKDNYNTLESTL</sequence>